<gene>
    <name type="ordered locus">HP_0560</name>
</gene>
<feature type="chain" id="PRO_0000128689" description="Uncharacterized protein HP_0560">
    <location>
        <begin position="1"/>
        <end position="26"/>
    </location>
</feature>
<feature type="transmembrane region" description="Helical" evidence="1">
    <location>
        <begin position="3"/>
        <end position="23"/>
    </location>
</feature>
<accession>P64661</accession>
<accession>O25285</accession>
<organism>
    <name type="scientific">Helicobacter pylori (strain ATCC 700392 / 26695)</name>
    <name type="common">Campylobacter pylori</name>
    <dbReference type="NCBI Taxonomy" id="85962"/>
    <lineage>
        <taxon>Bacteria</taxon>
        <taxon>Pseudomonadati</taxon>
        <taxon>Campylobacterota</taxon>
        <taxon>Epsilonproteobacteria</taxon>
        <taxon>Campylobacterales</taxon>
        <taxon>Helicobacteraceae</taxon>
        <taxon>Helicobacter</taxon>
    </lineage>
</organism>
<reference key="1">
    <citation type="journal article" date="1997" name="Nature">
        <title>The complete genome sequence of the gastric pathogen Helicobacter pylori.</title>
        <authorList>
            <person name="Tomb J.-F."/>
            <person name="White O."/>
            <person name="Kerlavage A.R."/>
            <person name="Clayton R.A."/>
            <person name="Sutton G.G."/>
            <person name="Fleischmann R.D."/>
            <person name="Ketchum K.A."/>
            <person name="Klenk H.-P."/>
            <person name="Gill S.R."/>
            <person name="Dougherty B.A."/>
            <person name="Nelson K.E."/>
            <person name="Quackenbush J."/>
            <person name="Zhou L."/>
            <person name="Kirkness E.F."/>
            <person name="Peterson S.N."/>
            <person name="Loftus B.J."/>
            <person name="Richardson D.L."/>
            <person name="Dodson R.J."/>
            <person name="Khalak H.G."/>
            <person name="Glodek A."/>
            <person name="McKenney K."/>
            <person name="FitzGerald L.M."/>
            <person name="Lee N."/>
            <person name="Adams M.D."/>
            <person name="Hickey E.K."/>
            <person name="Berg D.E."/>
            <person name="Gocayne J.D."/>
            <person name="Utterback T.R."/>
            <person name="Peterson J.D."/>
            <person name="Kelley J.M."/>
            <person name="Cotton M.D."/>
            <person name="Weidman J.F."/>
            <person name="Fujii C."/>
            <person name="Bowman C."/>
            <person name="Watthey L."/>
            <person name="Wallin E."/>
            <person name="Hayes W.S."/>
            <person name="Borodovsky M."/>
            <person name="Karp P.D."/>
            <person name="Smith H.O."/>
            <person name="Fraser C.M."/>
            <person name="Venter J.C."/>
        </authorList>
    </citation>
    <scope>NUCLEOTIDE SEQUENCE [LARGE SCALE GENOMIC DNA]</scope>
    <source>
        <strain>ATCC 700392 / 26695</strain>
    </source>
</reference>
<comment type="subcellular location">
    <subcellularLocation>
        <location evidence="2">Membrane</location>
        <topology evidence="2">Single-pass membrane protein</topology>
    </subcellularLocation>
</comment>
<evidence type="ECO:0000255" key="1"/>
<evidence type="ECO:0000305" key="2"/>
<protein>
    <recommendedName>
        <fullName>Uncharacterized protein HP_0560</fullName>
    </recommendedName>
</protein>
<keyword id="KW-0472">Membrane</keyword>
<keyword id="KW-1185">Reference proteome</keyword>
<keyword id="KW-0812">Transmembrane</keyword>
<keyword id="KW-1133">Transmembrane helix</keyword>
<proteinExistence type="predicted"/>
<dbReference type="EMBL" id="AE000511">
    <property type="protein sequence ID" value="AAD07633.1"/>
    <property type="molecule type" value="Genomic_DNA"/>
</dbReference>
<dbReference type="PIR" id="H64589">
    <property type="entry name" value="H64589"/>
</dbReference>
<dbReference type="STRING" id="85962.HP_0560"/>
<dbReference type="EnsemblBacteria" id="AAD07633">
    <property type="protein sequence ID" value="AAD07633"/>
    <property type="gene ID" value="HP_0560"/>
</dbReference>
<dbReference type="KEGG" id="hpy:HP_0560"/>
<dbReference type="InParanoid" id="P64661"/>
<dbReference type="Proteomes" id="UP000000429">
    <property type="component" value="Chromosome"/>
</dbReference>
<dbReference type="GO" id="GO:0016020">
    <property type="term" value="C:membrane"/>
    <property type="evidence" value="ECO:0007669"/>
    <property type="project" value="UniProtKB-SubCell"/>
</dbReference>
<sequence length="26" mass="3169">MGIIYLILFLIVIYLLYRILDVLEQK</sequence>
<name>Y560_HELPY</name>